<keyword id="KW-0997">Cell inner membrane</keyword>
<keyword id="KW-1003">Cell membrane</keyword>
<keyword id="KW-0472">Membrane</keyword>
<keyword id="KW-0520">NAD</keyword>
<keyword id="KW-0874">Quinone</keyword>
<keyword id="KW-1185">Reference proteome</keyword>
<keyword id="KW-1278">Translocase</keyword>
<keyword id="KW-0813">Transport</keyword>
<keyword id="KW-0830">Ubiquinone</keyword>
<comment type="function">
    <text evidence="1">NDH-1 shuttles electrons from NADH, via FMN and iron-sulfur (Fe-S) centers, to quinones in the respiratory chain. The immediate electron acceptor for the enzyme in this species is believed to be ubiquinone. Couples the redox reaction to proton translocation (for every two electrons transferred, four hydrogen ions are translocated across the cytoplasmic membrane), and thus conserves the redox energy in a proton gradient.</text>
</comment>
<comment type="catalytic activity">
    <reaction evidence="1">
        <text>a quinone + NADH + 5 H(+)(in) = a quinol + NAD(+) + 4 H(+)(out)</text>
        <dbReference type="Rhea" id="RHEA:57888"/>
        <dbReference type="ChEBI" id="CHEBI:15378"/>
        <dbReference type="ChEBI" id="CHEBI:24646"/>
        <dbReference type="ChEBI" id="CHEBI:57540"/>
        <dbReference type="ChEBI" id="CHEBI:57945"/>
        <dbReference type="ChEBI" id="CHEBI:132124"/>
    </reaction>
</comment>
<comment type="subunit">
    <text evidence="1">NDH-1 is composed of 14 different subunits. Subunits NuoB, C, D, E, F, and G constitute the peripheral sector of the complex.</text>
</comment>
<comment type="subcellular location">
    <subcellularLocation>
        <location evidence="1">Cell inner membrane</location>
        <topology evidence="1">Peripheral membrane protein</topology>
        <orientation evidence="1">Cytoplasmic side</orientation>
    </subcellularLocation>
</comment>
<comment type="similarity">
    <text evidence="1">Belongs to the complex I 49 kDa subunit family.</text>
</comment>
<reference key="1">
    <citation type="journal article" date="2009" name="Appl. Environ. Microbiol.">
        <title>Complete genome sequence of the chemolithoautotrophic marine magnetotactic coccus strain MC-1.</title>
        <authorList>
            <person name="Schubbe S."/>
            <person name="Williams T.J."/>
            <person name="Xie G."/>
            <person name="Kiss H.E."/>
            <person name="Brettin T.S."/>
            <person name="Martinez D."/>
            <person name="Ross C.A."/>
            <person name="Schuler D."/>
            <person name="Cox B.L."/>
            <person name="Nealson K.H."/>
            <person name="Bazylinski D.A."/>
        </authorList>
    </citation>
    <scope>NUCLEOTIDE SEQUENCE [LARGE SCALE GENOMIC DNA]</scope>
    <source>
        <strain>ATCC BAA-1437 / JCM 17883 / MC-1</strain>
    </source>
</reference>
<accession>A0LDS4</accession>
<sequence length="397" mass="45486">MPATITDHKEFQNYAINFGPQHPAAHGVLRLLLELDGEVVERADPHVGLLHRGTEKLLEQKTYIQGTPYFDRLDYMSMMSEEHAWVIAVERLGQIEVPERAQYIRTIYAEITRFINHLLFFAAHGLDVGAMTMFLYCFREREELMDIYEAACGARMHANYFRPGGVARDLPDGLEQRIRDFCNHFPSKLDEYETLLTNNRIWKQRLVDIGKVSQEDAFSWGFTGPMLRGSGVAFDLRKAEPYDAYDRVEFDIPVGKNGDSYDRYLVRIEECREGVKIIQQCLDQMQPGPVRNDNFKISMPYRQDMQQDMESMIHHFKLCTEGFNLPAGEVYAAVETPKGELGVYLVSDGGNKPYRARIRAAGFNHLQAVKEMARGHMIADVTTIIGSIDIVFGEIDR</sequence>
<protein>
    <recommendedName>
        <fullName evidence="1">NADH-quinone oxidoreductase subunit D</fullName>
        <ecNumber evidence="1">7.1.1.-</ecNumber>
    </recommendedName>
    <alternativeName>
        <fullName evidence="1">NADH dehydrogenase I subunit D</fullName>
    </alternativeName>
    <alternativeName>
        <fullName evidence="1">NDH-1 subunit D</fullName>
    </alternativeName>
</protein>
<evidence type="ECO:0000255" key="1">
    <source>
        <dbReference type="HAMAP-Rule" id="MF_01358"/>
    </source>
</evidence>
<feature type="chain" id="PRO_0000357841" description="NADH-quinone oxidoreductase subunit D">
    <location>
        <begin position="1"/>
        <end position="397"/>
    </location>
</feature>
<proteinExistence type="inferred from homology"/>
<dbReference type="EC" id="7.1.1.-" evidence="1"/>
<dbReference type="EMBL" id="CP000471">
    <property type="protein sequence ID" value="ABK46117.1"/>
    <property type="molecule type" value="Genomic_DNA"/>
</dbReference>
<dbReference type="RefSeq" id="WP_011715171.1">
    <property type="nucleotide sequence ID" value="NC_008576.1"/>
</dbReference>
<dbReference type="SMR" id="A0LDS4"/>
<dbReference type="STRING" id="156889.Mmc1_3632"/>
<dbReference type="KEGG" id="mgm:Mmc1_3632"/>
<dbReference type="eggNOG" id="COG0649">
    <property type="taxonomic scope" value="Bacteria"/>
</dbReference>
<dbReference type="HOGENOM" id="CLU_015134_1_2_5"/>
<dbReference type="OrthoDB" id="9801496at2"/>
<dbReference type="Proteomes" id="UP000002586">
    <property type="component" value="Chromosome"/>
</dbReference>
<dbReference type="GO" id="GO:0005886">
    <property type="term" value="C:plasma membrane"/>
    <property type="evidence" value="ECO:0007669"/>
    <property type="project" value="UniProtKB-SubCell"/>
</dbReference>
<dbReference type="GO" id="GO:0051287">
    <property type="term" value="F:NAD binding"/>
    <property type="evidence" value="ECO:0007669"/>
    <property type="project" value="InterPro"/>
</dbReference>
<dbReference type="GO" id="GO:0050136">
    <property type="term" value="F:NADH:ubiquinone reductase (non-electrogenic) activity"/>
    <property type="evidence" value="ECO:0007669"/>
    <property type="project" value="UniProtKB-UniRule"/>
</dbReference>
<dbReference type="GO" id="GO:0048038">
    <property type="term" value="F:quinone binding"/>
    <property type="evidence" value="ECO:0007669"/>
    <property type="project" value="UniProtKB-KW"/>
</dbReference>
<dbReference type="FunFam" id="1.10.645.10:FF:000005">
    <property type="entry name" value="NADH-quinone oxidoreductase subunit D"/>
    <property type="match status" value="1"/>
</dbReference>
<dbReference type="Gene3D" id="1.10.645.10">
    <property type="entry name" value="Cytochrome-c3 Hydrogenase, chain B"/>
    <property type="match status" value="1"/>
</dbReference>
<dbReference type="HAMAP" id="MF_01358">
    <property type="entry name" value="NDH1_NuoD"/>
    <property type="match status" value="1"/>
</dbReference>
<dbReference type="InterPro" id="IPR001135">
    <property type="entry name" value="NADH_Q_OxRdtase_suD"/>
</dbReference>
<dbReference type="InterPro" id="IPR014029">
    <property type="entry name" value="NADH_UbQ_OxRdtase_49kDa_CS"/>
</dbReference>
<dbReference type="InterPro" id="IPR022885">
    <property type="entry name" value="NDH1_su_D/H"/>
</dbReference>
<dbReference type="InterPro" id="IPR029014">
    <property type="entry name" value="NiFe-Hase_large"/>
</dbReference>
<dbReference type="NCBIfam" id="TIGR01962">
    <property type="entry name" value="NuoD"/>
    <property type="match status" value="1"/>
</dbReference>
<dbReference type="NCBIfam" id="NF004739">
    <property type="entry name" value="PRK06075.1"/>
    <property type="match status" value="1"/>
</dbReference>
<dbReference type="PANTHER" id="PTHR11993:SF10">
    <property type="entry name" value="NADH DEHYDROGENASE [UBIQUINONE] IRON-SULFUR PROTEIN 2, MITOCHONDRIAL"/>
    <property type="match status" value="1"/>
</dbReference>
<dbReference type="PANTHER" id="PTHR11993">
    <property type="entry name" value="NADH-UBIQUINONE OXIDOREDUCTASE 49 KDA SUBUNIT"/>
    <property type="match status" value="1"/>
</dbReference>
<dbReference type="Pfam" id="PF00346">
    <property type="entry name" value="Complex1_49kDa"/>
    <property type="match status" value="1"/>
</dbReference>
<dbReference type="SUPFAM" id="SSF56762">
    <property type="entry name" value="HydB/Nqo4-like"/>
    <property type="match status" value="1"/>
</dbReference>
<dbReference type="PROSITE" id="PS00535">
    <property type="entry name" value="COMPLEX1_49K"/>
    <property type="match status" value="1"/>
</dbReference>
<organism>
    <name type="scientific">Magnetococcus marinus (strain ATCC BAA-1437 / JCM 17883 / MC-1)</name>
    <dbReference type="NCBI Taxonomy" id="156889"/>
    <lineage>
        <taxon>Bacteria</taxon>
        <taxon>Pseudomonadati</taxon>
        <taxon>Pseudomonadota</taxon>
        <taxon>Alphaproteobacteria</taxon>
        <taxon>Magnetococcales</taxon>
        <taxon>Magnetococcaceae</taxon>
        <taxon>Magnetococcus</taxon>
    </lineage>
</organism>
<name>NUOD_MAGMM</name>
<gene>
    <name evidence="1" type="primary">nuoD</name>
    <name type="ordered locus">Mmc1_3632</name>
</gene>